<protein>
    <recommendedName>
        <fullName evidence="1">Isopentenyl-diphosphate delta-isomerase</fullName>
        <ecNumber evidence="1">5.3.3.2</ecNumber>
    </recommendedName>
    <alternativeName>
        <fullName evidence="1">Isopentenyl pyrophosphate isomerase</fullName>
        <shortName evidence="1">IPP isomerase</shortName>
    </alternativeName>
</protein>
<reference key="1">
    <citation type="journal article" date="2004" name="Proc. Natl. Acad. Sci. U.S.A.">
        <title>The diploid genome sequence of Candida albicans.</title>
        <authorList>
            <person name="Jones T."/>
            <person name="Federspiel N.A."/>
            <person name="Chibana H."/>
            <person name="Dungan J."/>
            <person name="Kalman S."/>
            <person name="Magee B.B."/>
            <person name="Newport G."/>
            <person name="Thorstenson Y.R."/>
            <person name="Agabian N."/>
            <person name="Magee P.T."/>
            <person name="Davis R.W."/>
            <person name="Scherer S."/>
        </authorList>
    </citation>
    <scope>NUCLEOTIDE SEQUENCE [LARGE SCALE GENOMIC DNA]</scope>
    <source>
        <strain>SC5314 / ATCC MYA-2876</strain>
    </source>
</reference>
<reference key="2">
    <citation type="journal article" date="2007" name="Genome Biol.">
        <title>Assembly of the Candida albicans genome into sixteen supercontigs aligned on the eight chromosomes.</title>
        <authorList>
            <person name="van het Hoog M."/>
            <person name="Rast T.J."/>
            <person name="Martchenko M."/>
            <person name="Grindle S."/>
            <person name="Dignard D."/>
            <person name="Hogues H."/>
            <person name="Cuomo C."/>
            <person name="Berriman M."/>
            <person name="Scherer S."/>
            <person name="Magee B.B."/>
            <person name="Whiteway M."/>
            <person name="Chibana H."/>
            <person name="Nantel A."/>
            <person name="Magee P.T."/>
        </authorList>
    </citation>
    <scope>GENOME REANNOTATION</scope>
    <source>
        <strain>SC5314 / ATCC MYA-2876</strain>
    </source>
</reference>
<reference key="3">
    <citation type="journal article" date="2013" name="Genome Biol.">
        <title>Assembly of a phased diploid Candida albicans genome facilitates allele-specific measurements and provides a simple model for repeat and indel structure.</title>
        <authorList>
            <person name="Muzzey D."/>
            <person name="Schwartz K."/>
            <person name="Weissman J.S."/>
            <person name="Sherlock G."/>
        </authorList>
    </citation>
    <scope>NUCLEOTIDE SEQUENCE [LARGE SCALE GENOMIC DNA]</scope>
    <scope>GENOME REANNOTATION</scope>
    <source>
        <strain>SC5314 / ATCC MYA-2876</strain>
    </source>
</reference>
<reference key="4">
    <citation type="journal article" date="2003" name="Med. Mycol.">
        <title>Antifungal activity of fluconazole in combination with lovastatin and their effects on gene expression in the ergosterol and prenylation pathways in Candida albicans.</title>
        <authorList>
            <person name="Song J.L."/>
            <person name="Lyons C.N."/>
            <person name="Holleman S."/>
            <person name="Oliver B.G."/>
            <person name="White T.C."/>
        </authorList>
    </citation>
    <scope>FUNCTION</scope>
</reference>
<comment type="function">
    <text evidence="1 6">Isopentenyl-diphosphate delta-isomerase; part of the second module of ergosterol biosynthesis pathway that includes the middle steps of the pathway (By similarity). IDI1 catalyzes the 1,3-allylic rearrangement of isopentenyl (IPP) to its highly electrophilic allylic isomer, dimethylallyl diphosphate (DMAPP) (By similarity). The second module is carried out in the vacuole and involves the formation of farnesyl diphosphate, which is also an important intermediate in the biosynthesis of ubiquinone, dolichol, heme and prenylated proteins. Activity by the mevalonate kinase ERG12 first converts mevalonate into 5-phosphomevalonate. 5-phosphomevalonate is then further converted to 5-diphosphomevalonate by the phosphomevalonate kinase ERG8. The diphosphomevalonate decarboxylase MVD then produces isopentenyl diphosphate. The isopentenyl-diphosphate delta-isomerase IDI1 then catalyzes the 1,3-allylic rearrangement of the homoallylic substrate isopentenyl (IPP) to its highly electrophilic allylic isomer, dimethylallyl diphosphate (DMAPP). Finally the farnesyl diphosphate synthase ERG20 catalyzes the sequential condensation of isopentenyl pyrophosphate with dimethylallyl pyrophosphate, and then with the resultant geranylpyrophosphate to the ultimate product farnesyl pyrophosphate (Probable).</text>
</comment>
<comment type="catalytic activity">
    <reaction evidence="1">
        <text>isopentenyl diphosphate = dimethylallyl diphosphate</text>
        <dbReference type="Rhea" id="RHEA:23284"/>
        <dbReference type="ChEBI" id="CHEBI:57623"/>
        <dbReference type="ChEBI" id="CHEBI:128769"/>
        <dbReference type="EC" id="5.3.3.2"/>
    </reaction>
    <physiologicalReaction direction="left-to-right" evidence="1">
        <dbReference type="Rhea" id="RHEA:23285"/>
    </physiologicalReaction>
</comment>
<comment type="cofactor">
    <cofactor evidence="3">
        <name>Mg(2+)</name>
        <dbReference type="ChEBI" id="CHEBI:18420"/>
    </cofactor>
    <text evidence="3">Binds 1 Mg(2+) ion per subunit.</text>
</comment>
<comment type="pathway">
    <text evidence="6">Isoprenoid biosynthesis; dimethylallyl diphosphate biosynthesis; dimethylallyl diphosphate from isopentenyl diphosphate: step 1/1.</text>
</comment>
<comment type="subcellular location">
    <subcellularLocation>
        <location evidence="5">Cytoplasm</location>
    </subcellularLocation>
</comment>
<comment type="similarity">
    <text evidence="5">Belongs to the IPP isomerase type 1 family.</text>
</comment>
<feature type="chain" id="PRO_0000454169" description="Isopentenyl-diphosphate delta-isomerase">
    <location>
        <begin position="1"/>
        <end position="284"/>
    </location>
</feature>
<feature type="domain" description="Nudix hydrolase" evidence="4">
    <location>
        <begin position="90"/>
        <end position="256"/>
    </location>
</feature>
<feature type="short sequence motif" description="Nudix box" evidence="4">
    <location>
        <begin position="128"/>
        <end position="172"/>
    </location>
</feature>
<feature type="active site" evidence="1">
    <location>
        <position position="127"/>
    </location>
</feature>
<feature type="active site" evidence="1">
    <location>
        <position position="206"/>
    </location>
</feature>
<feature type="binding site" evidence="2">
    <location>
        <position position="77"/>
    </location>
    <ligand>
        <name>substrate</name>
    </ligand>
</feature>
<feature type="binding site" evidence="3">
    <location>
        <position position="81"/>
    </location>
    <ligand>
        <name>Mg(2+)</name>
        <dbReference type="ChEBI" id="CHEBI:18420"/>
    </ligand>
</feature>
<feature type="binding site" evidence="3">
    <location>
        <position position="92"/>
    </location>
    <ligand>
        <name>Mg(2+)</name>
        <dbReference type="ChEBI" id="CHEBI:18420"/>
    </ligand>
</feature>
<feature type="binding site" evidence="2">
    <location>
        <position position="111"/>
    </location>
    <ligand>
        <name>substrate</name>
    </ligand>
</feature>
<feature type="binding site" evidence="2">
    <location>
        <position position="115"/>
    </location>
    <ligand>
        <name>substrate</name>
    </ligand>
</feature>
<feature type="binding site" evidence="2">
    <location>
        <position position="128"/>
    </location>
    <ligand>
        <name>substrate</name>
    </ligand>
</feature>
<feature type="binding site" evidence="3">
    <location>
        <position position="204"/>
    </location>
    <ligand>
        <name>Mg(2+)</name>
        <dbReference type="ChEBI" id="CHEBI:18420"/>
    </ligand>
</feature>
<feature type="binding site" evidence="3">
    <location>
        <position position="206"/>
    </location>
    <ligand>
        <name>Mg(2+)</name>
        <dbReference type="ChEBI" id="CHEBI:18420"/>
    </ligand>
</feature>
<sequence>MSSEYAKLVASLSNQDILTKWPEVTPLKKISGIPRSAGSDSSDSDLFDGHDEEQIRLMEELCIVLDYDDKPVGAGTKKLCHIMDNINAGLLHRAFSVFLFNEDGKLLLQQRADEKITFANMWTNTCCSHPLCVPSELGVDSSLEGSKDVNNLTNAVKGAKVAAQRKLEHELGIPFEDAPIENFTYLTRIHYKSPSGDESSKWGEHEIDYILILKTKNDITVNANYNEVRDFKYVSADELKVMFEDDSLVFTPWFKLICQSFLFKWWDNLDNLDQFKDEEIHRLL</sequence>
<gene>
    <name evidence="1" type="primary">IDI1</name>
    <name type="ordered locus">orf19.2775</name>
    <name type="ORF">CAALFM_C402280WA</name>
</gene>
<dbReference type="EC" id="5.3.3.2" evidence="1"/>
<dbReference type="EMBL" id="CP017626">
    <property type="protein sequence ID" value="AOW28999.1"/>
    <property type="molecule type" value="Genomic_DNA"/>
</dbReference>
<dbReference type="RefSeq" id="XP_720525.2">
    <property type="nucleotide sequence ID" value="XM_715432.2"/>
</dbReference>
<dbReference type="SMR" id="A0A1D8PLI2"/>
<dbReference type="FunCoup" id="A0A1D8PLI2">
    <property type="interactions" value="809"/>
</dbReference>
<dbReference type="STRING" id="237561.A0A1D8PLI2"/>
<dbReference type="EnsemblFungi" id="C4_02280W_A-T">
    <property type="protein sequence ID" value="C4_02280W_A-T-p1"/>
    <property type="gene ID" value="C4_02280W_A"/>
</dbReference>
<dbReference type="GeneID" id="3637894"/>
<dbReference type="KEGG" id="cal:CAALFM_C402280WA"/>
<dbReference type="CGD" id="CAL0000180278">
    <property type="gene designation" value="IDI1"/>
</dbReference>
<dbReference type="VEuPathDB" id="FungiDB:C4_02280W_A"/>
<dbReference type="eggNOG" id="KOG0142">
    <property type="taxonomic scope" value="Eukaryota"/>
</dbReference>
<dbReference type="InParanoid" id="A0A1D8PLI2"/>
<dbReference type="OrthoDB" id="510307at2759"/>
<dbReference type="UniPathway" id="UPA00059">
    <property type="reaction ID" value="UER00104"/>
</dbReference>
<dbReference type="Proteomes" id="UP000000559">
    <property type="component" value="Chromosome 4"/>
</dbReference>
<dbReference type="GO" id="GO:0005737">
    <property type="term" value="C:cytoplasm"/>
    <property type="evidence" value="ECO:0000318"/>
    <property type="project" value="GO_Central"/>
</dbReference>
<dbReference type="GO" id="GO:0004452">
    <property type="term" value="F:isopentenyl-diphosphate delta-isomerase activity"/>
    <property type="evidence" value="ECO:0000318"/>
    <property type="project" value="GO_Central"/>
</dbReference>
<dbReference type="GO" id="GO:0046872">
    <property type="term" value="F:metal ion binding"/>
    <property type="evidence" value="ECO:0007669"/>
    <property type="project" value="UniProtKB-KW"/>
</dbReference>
<dbReference type="GO" id="GO:0050992">
    <property type="term" value="P:dimethylallyl diphosphate biosynthetic process"/>
    <property type="evidence" value="ECO:0007669"/>
    <property type="project" value="UniProtKB-UniPathway"/>
</dbReference>
<dbReference type="GO" id="GO:0006696">
    <property type="term" value="P:ergosterol biosynthetic process"/>
    <property type="evidence" value="ECO:0007669"/>
    <property type="project" value="EnsemblFungi"/>
</dbReference>
<dbReference type="GO" id="GO:0045337">
    <property type="term" value="P:farnesyl diphosphate biosynthetic process"/>
    <property type="evidence" value="ECO:0007669"/>
    <property type="project" value="EnsemblFungi"/>
</dbReference>
<dbReference type="GO" id="GO:0009240">
    <property type="term" value="P:isopentenyl diphosphate biosynthetic process"/>
    <property type="evidence" value="ECO:0000318"/>
    <property type="project" value="GO_Central"/>
</dbReference>
<dbReference type="CDD" id="cd02885">
    <property type="entry name" value="NUDIX_IPP_Isomerase"/>
    <property type="match status" value="1"/>
</dbReference>
<dbReference type="FunFam" id="3.90.79.10:FF:000012">
    <property type="entry name" value="Isopentenyl-diphosphate Delta-isomerase 1"/>
    <property type="match status" value="1"/>
</dbReference>
<dbReference type="Gene3D" id="3.90.79.10">
    <property type="entry name" value="Nucleoside Triphosphate Pyrophosphohydrolase"/>
    <property type="match status" value="1"/>
</dbReference>
<dbReference type="InterPro" id="IPR011876">
    <property type="entry name" value="IsopentenylPP_isomerase_typ1"/>
</dbReference>
<dbReference type="InterPro" id="IPR015797">
    <property type="entry name" value="NUDIX_hydrolase-like_dom_sf"/>
</dbReference>
<dbReference type="InterPro" id="IPR000086">
    <property type="entry name" value="NUDIX_hydrolase_dom"/>
</dbReference>
<dbReference type="NCBIfam" id="TIGR02150">
    <property type="entry name" value="IPP_isom_1"/>
    <property type="match status" value="1"/>
</dbReference>
<dbReference type="PANTHER" id="PTHR10885">
    <property type="entry name" value="ISOPENTENYL-DIPHOSPHATE DELTA-ISOMERASE"/>
    <property type="match status" value="1"/>
</dbReference>
<dbReference type="PANTHER" id="PTHR10885:SF0">
    <property type="entry name" value="ISOPENTENYL-DIPHOSPHATE DELTA-ISOMERASE"/>
    <property type="match status" value="1"/>
</dbReference>
<dbReference type="Pfam" id="PF00293">
    <property type="entry name" value="NUDIX"/>
    <property type="match status" value="1"/>
</dbReference>
<dbReference type="PIRSF" id="PIRSF018427">
    <property type="entry name" value="Isopntndiph_ism"/>
    <property type="match status" value="1"/>
</dbReference>
<dbReference type="SUPFAM" id="SSF55811">
    <property type="entry name" value="Nudix"/>
    <property type="match status" value="1"/>
</dbReference>
<dbReference type="PROSITE" id="PS51462">
    <property type="entry name" value="NUDIX"/>
    <property type="match status" value="1"/>
</dbReference>
<keyword id="KW-0963">Cytoplasm</keyword>
<keyword id="KW-0413">Isomerase</keyword>
<keyword id="KW-0414">Isoprene biosynthesis</keyword>
<keyword id="KW-0444">Lipid biosynthesis</keyword>
<keyword id="KW-0443">Lipid metabolism</keyword>
<keyword id="KW-0460">Magnesium</keyword>
<keyword id="KW-0479">Metal-binding</keyword>
<keyword id="KW-1185">Reference proteome</keyword>
<keyword id="KW-0752">Steroid biosynthesis</keyword>
<proteinExistence type="inferred from homology"/>
<name>IDI1_CANAL</name>
<evidence type="ECO:0000250" key="1">
    <source>
        <dbReference type="UniProtKB" id="P15496"/>
    </source>
</evidence>
<evidence type="ECO:0000250" key="2">
    <source>
        <dbReference type="UniProtKB" id="Q13907"/>
    </source>
</evidence>
<evidence type="ECO:0000250" key="3">
    <source>
        <dbReference type="UniProtKB" id="Q46822"/>
    </source>
</evidence>
<evidence type="ECO:0000255" key="4">
    <source>
        <dbReference type="PROSITE-ProRule" id="PRU00794"/>
    </source>
</evidence>
<evidence type="ECO:0000305" key="5"/>
<evidence type="ECO:0000305" key="6">
    <source>
    </source>
</evidence>
<accession>A0A1D8PLI2</accession>
<organism>
    <name type="scientific">Candida albicans (strain SC5314 / ATCC MYA-2876)</name>
    <name type="common">Yeast</name>
    <dbReference type="NCBI Taxonomy" id="237561"/>
    <lineage>
        <taxon>Eukaryota</taxon>
        <taxon>Fungi</taxon>
        <taxon>Dikarya</taxon>
        <taxon>Ascomycota</taxon>
        <taxon>Saccharomycotina</taxon>
        <taxon>Pichiomycetes</taxon>
        <taxon>Debaryomycetaceae</taxon>
        <taxon>Candida/Lodderomyces clade</taxon>
        <taxon>Candida</taxon>
    </lineage>
</organism>